<comment type="function">
    <text evidence="2">The TFIID basal transcription factor complex plays a major role in the initiation of RNA polymerase II (Pol II)-dependent transcription. TFIID recognizes and binds promoters with or without a TATA box via its subunit tbp, a TATA-box-binding protein, and promotes assembly of the pre-initiation complex (PIC). The TFIID complex consists of tbp and TBP-associated factors (TAFs). Mediates both basal and activator-dependent transcription.</text>
</comment>
<comment type="subunit">
    <text evidence="2">Component of the TFIID basal transcription factor complex, composed of TATA-box-binding protein tbp, and a number of TBP-associated factors (TAFs).</text>
</comment>
<comment type="subcellular location">
    <subcellularLocation>
        <location evidence="1">Nucleus</location>
    </subcellularLocation>
    <subcellularLocation>
        <location evidence="1">Cytoplasm</location>
    </subcellularLocation>
</comment>
<comment type="similarity">
    <text evidence="5">Belongs to the TAF8 family.</text>
</comment>
<keyword id="KW-0963">Cytoplasm</keyword>
<keyword id="KW-0217">Developmental protein</keyword>
<keyword id="KW-0221">Differentiation</keyword>
<keyword id="KW-0539">Nucleus</keyword>
<keyword id="KW-1185">Reference proteome</keyword>
<keyword id="KW-0804">Transcription</keyword>
<keyword id="KW-0805">Transcription regulation</keyword>
<sequence>MFPTIRSCARGTSTPADNYMLARRRTLQVVVSSLLTEAGFDSAEKAAVESLTEMLQSYLSEIGRSAKSYCEHTARTQPTLPDIVVTLIEMGFNVDSLPAYAKRSQRMVITAPPVTNNPVVPKALSAGDNKPHPAHIPSHFPEFPDPHTYIKTPTYREPVCDYQVLREKAASQRRDVERALTRFMAKTGETQSLFKDDTSTFPLIAARPLSIPYLNALLPSELELQQVDETDSSEQDDQTDTENLSLHLQGDEVGMEKENASVLQQNSMKGGEETLIDNPYLRPVKKPKLRRKK</sequence>
<gene>
    <name type="primary">taf8</name>
</gene>
<proteinExistence type="evidence at transcript level"/>
<evidence type="ECO:0000250" key="1"/>
<evidence type="ECO:0000250" key="2">
    <source>
        <dbReference type="UniProtKB" id="Q7Z7C8"/>
    </source>
</evidence>
<evidence type="ECO:0000255" key="3"/>
<evidence type="ECO:0000256" key="4">
    <source>
        <dbReference type="SAM" id="MobiDB-lite"/>
    </source>
</evidence>
<evidence type="ECO:0000305" key="5"/>
<organism>
    <name type="scientific">Xenopus laevis</name>
    <name type="common">African clawed frog</name>
    <dbReference type="NCBI Taxonomy" id="8355"/>
    <lineage>
        <taxon>Eukaryota</taxon>
        <taxon>Metazoa</taxon>
        <taxon>Chordata</taxon>
        <taxon>Craniata</taxon>
        <taxon>Vertebrata</taxon>
        <taxon>Euteleostomi</taxon>
        <taxon>Amphibia</taxon>
        <taxon>Batrachia</taxon>
        <taxon>Anura</taxon>
        <taxon>Pipoidea</taxon>
        <taxon>Pipidae</taxon>
        <taxon>Xenopodinae</taxon>
        <taxon>Xenopus</taxon>
        <taxon>Xenopus</taxon>
    </lineage>
</organism>
<protein>
    <recommendedName>
        <fullName>Transcription initiation factor TFIID subunit 8</fullName>
    </recommendedName>
    <alternativeName>
        <fullName>TBP-associated factor 8</fullName>
    </alternativeName>
</protein>
<feature type="chain" id="PRO_0000315401" description="Transcription initiation factor TFIID subunit 8">
    <location>
        <begin position="1"/>
        <end position="293"/>
    </location>
</feature>
<feature type="domain" description="Histone-fold">
    <location>
        <begin position="25"/>
        <end position="92"/>
    </location>
</feature>
<feature type="region of interest" description="Disordered" evidence="4">
    <location>
        <begin position="247"/>
        <end position="293"/>
    </location>
</feature>
<feature type="short sequence motif" description="Nuclear localization signal" evidence="3">
    <location>
        <begin position="280"/>
        <end position="293"/>
    </location>
</feature>
<feature type="compositionally biased region" description="Basic residues" evidence="4">
    <location>
        <begin position="283"/>
        <end position="293"/>
    </location>
</feature>
<dbReference type="EMBL" id="BC043877">
    <property type="protein sequence ID" value="AAH43877.1"/>
    <property type="molecule type" value="mRNA"/>
</dbReference>
<dbReference type="RefSeq" id="NP_001080509.1">
    <property type="nucleotide sequence ID" value="NM_001087040.1"/>
</dbReference>
<dbReference type="SMR" id="Q7ZYA2"/>
<dbReference type="DNASU" id="380201"/>
<dbReference type="GeneID" id="380201"/>
<dbReference type="KEGG" id="xla:380201"/>
<dbReference type="AGR" id="Xenbase:XB-GENE-6253923"/>
<dbReference type="CTD" id="380201"/>
<dbReference type="Xenbase" id="XB-GENE-6253923">
    <property type="gene designation" value="taf8.S"/>
</dbReference>
<dbReference type="OrthoDB" id="2193813at2759"/>
<dbReference type="Proteomes" id="UP000186698">
    <property type="component" value="Chromosome 2S"/>
</dbReference>
<dbReference type="Bgee" id="380201">
    <property type="expression patterns" value="Expressed in blastula and 19 other cell types or tissues"/>
</dbReference>
<dbReference type="GO" id="GO:0005737">
    <property type="term" value="C:cytoplasm"/>
    <property type="evidence" value="ECO:0007669"/>
    <property type="project" value="UniProtKB-SubCell"/>
</dbReference>
<dbReference type="GO" id="GO:0005669">
    <property type="term" value="C:transcription factor TFIID complex"/>
    <property type="evidence" value="ECO:0000250"/>
    <property type="project" value="UniProtKB"/>
</dbReference>
<dbReference type="GO" id="GO:0046982">
    <property type="term" value="F:protein heterodimerization activity"/>
    <property type="evidence" value="ECO:0007669"/>
    <property type="project" value="InterPro"/>
</dbReference>
<dbReference type="GO" id="GO:0030154">
    <property type="term" value="P:cell differentiation"/>
    <property type="evidence" value="ECO:0007669"/>
    <property type="project" value="UniProtKB-KW"/>
</dbReference>
<dbReference type="GO" id="GO:0006367">
    <property type="term" value="P:transcription initiation at RNA polymerase II promoter"/>
    <property type="evidence" value="ECO:0000318"/>
    <property type="project" value="GO_Central"/>
</dbReference>
<dbReference type="CDD" id="cd22918">
    <property type="entry name" value="HFD_TAF8"/>
    <property type="match status" value="1"/>
</dbReference>
<dbReference type="CDD" id="cd08049">
    <property type="entry name" value="TAF8"/>
    <property type="match status" value="1"/>
</dbReference>
<dbReference type="FunFam" id="1.10.20.10:FF:000031">
    <property type="entry name" value="transcription initiation factor TFIID subunit 8 isoform X2"/>
    <property type="match status" value="1"/>
</dbReference>
<dbReference type="Gene3D" id="1.10.20.10">
    <property type="entry name" value="Histone, subunit A"/>
    <property type="match status" value="1"/>
</dbReference>
<dbReference type="InterPro" id="IPR006565">
    <property type="entry name" value="BTP"/>
</dbReference>
<dbReference type="InterPro" id="IPR009072">
    <property type="entry name" value="Histone-fold"/>
</dbReference>
<dbReference type="InterPro" id="IPR037818">
    <property type="entry name" value="TAF8"/>
</dbReference>
<dbReference type="InterPro" id="IPR019473">
    <property type="entry name" value="TFIID_su8_C"/>
</dbReference>
<dbReference type="PANTHER" id="PTHR46469">
    <property type="entry name" value="TRANSCRIPTION INITIATION FACTOR TFIID SUBUNIT 8"/>
    <property type="match status" value="1"/>
</dbReference>
<dbReference type="PANTHER" id="PTHR46469:SF1">
    <property type="entry name" value="TRANSCRIPTION INITIATION FACTOR TFIID SUBUNIT 8"/>
    <property type="match status" value="1"/>
</dbReference>
<dbReference type="Pfam" id="PF07524">
    <property type="entry name" value="Bromo_TP"/>
    <property type="match status" value="1"/>
</dbReference>
<dbReference type="Pfam" id="PF10406">
    <property type="entry name" value="TAF8_C"/>
    <property type="match status" value="1"/>
</dbReference>
<dbReference type="SMART" id="SM00576">
    <property type="entry name" value="BTP"/>
    <property type="match status" value="1"/>
</dbReference>
<dbReference type="SUPFAM" id="SSF47113">
    <property type="entry name" value="Histone-fold"/>
    <property type="match status" value="1"/>
</dbReference>
<reference key="1">
    <citation type="submission" date="2003-01" db="EMBL/GenBank/DDBJ databases">
        <authorList>
            <consortium name="NIH - Xenopus Gene Collection (XGC) project"/>
        </authorList>
    </citation>
    <scope>NUCLEOTIDE SEQUENCE [LARGE SCALE MRNA]</scope>
    <source>
        <tissue>Embryo</tissue>
    </source>
</reference>
<accession>Q7ZYA2</accession>
<name>TAF8_XENLA</name>